<proteinExistence type="inferred from homology"/>
<sequence length="828" mass="92231">MDGSSRPLPQTAQRKRRRPVLACDRCRRRKIRCDRKVPCSHCLRTGYASTCTYLANSNSSFPEEDLPGLDTTDPAMDMATSHPNHGHDRVPTDSGIGHSPPAQVEPIPSEGEMYGDFWDPLFVIHNTISTRKHRDPASTPASLGHVPRHTPAQAPTEVQVLIQRVRQLEQKVFSQQEPESSLAAPHIQQRHPQARRTVCQANLLGKSHWLVGFAQFDTIVHTLNNRLQDNDVEFRALFVKCQRLSRAIQQQYSLRASSLQALDGSLPSQEACDVCVNAYCRTFESVLRILHVPTFRQVYNEMWTGSQPTSRLFLLKLQLVIAIGARVVNQSDMLGTPDMASRCVAWIQEAQQWLHAPGESLQASVDGIQLYCLVLLTRIVCAVDASLVYVSTGALLQKAQQLGLHRDPSHFPAMPVFQAEIRRRLWCTVCELVLQSSTDSGTPPLISCDEFDCRPPANLNDTNLGTTSEPEPSNILTQTSFSILLMRCLPVRVQVAKVLNSVQLDPSYSEVLRLGEELTAACHYNTQMIKSMSPDHEQPTLFQLELLNLLTYRFLLCLHQPFAMKARKNLAYYFSRRVCLETAIQILAGHPTTPSGQNVNDYLNVKRYSSGLFRDPYLLASVTVGHEILCVTEGDWFSCQPVSPLTNNLSSTPNKSQQVPRTVLEEYVGLSECRLKDGAQIDIKTYVLLSCIIAQIKAAETGSPQDDAVLSAAVDSLEKCHIVLVDRYKSLAQSRESPQPLQVYGGSNVPCRLGKGSNDILDINETGEGEAWSDFDVSQVCVMCHSRYDLTSDCIQAEWSLQVEYPDLDWNLLNTWSACVPGSDSGAS</sequence>
<comment type="function">
    <text evidence="3 5">Transcription factor involved in regulation of gene cluster 23 that mediates the biosynthesis of leporins (PubMed:20447271, PubMed:26051490).</text>
</comment>
<comment type="subcellular location">
    <subcellularLocation>
        <location evidence="1">Nucleus</location>
    </subcellularLocation>
</comment>
<comment type="disruption phenotype">
    <text evidence="3">Results in significantly reduced expression of the leporins biosynthesis gene cluster (PubMed:26051490).</text>
</comment>
<evidence type="ECO:0000255" key="1">
    <source>
        <dbReference type="PROSITE-ProRule" id="PRU00227"/>
    </source>
</evidence>
<evidence type="ECO:0000256" key="2">
    <source>
        <dbReference type="SAM" id="MobiDB-lite"/>
    </source>
</evidence>
<evidence type="ECO:0000269" key="3">
    <source>
    </source>
</evidence>
<evidence type="ECO:0000303" key="4">
    <source>
    </source>
</evidence>
<evidence type="ECO:0000305" key="5">
    <source>
    </source>
</evidence>
<gene>
    <name evidence="4" type="primary">lepB</name>
    <name type="ORF">AFLA_066900</name>
</gene>
<organism>
    <name type="scientific">Aspergillus flavus (strain ATCC 200026 / FGSC A1120 / IAM 13836 / NRRL 3357 / JCM 12722 / SRRC 167)</name>
    <dbReference type="NCBI Taxonomy" id="332952"/>
    <lineage>
        <taxon>Eukaryota</taxon>
        <taxon>Fungi</taxon>
        <taxon>Dikarya</taxon>
        <taxon>Ascomycota</taxon>
        <taxon>Pezizomycotina</taxon>
        <taxon>Eurotiomycetes</taxon>
        <taxon>Eurotiomycetidae</taxon>
        <taxon>Eurotiales</taxon>
        <taxon>Aspergillaceae</taxon>
        <taxon>Aspergillus</taxon>
        <taxon>Aspergillus subgen. Circumdati</taxon>
    </lineage>
</organism>
<feature type="chain" id="PRO_0000438458" description="Transcription factor lepE">
    <location>
        <begin position="1"/>
        <end position="828"/>
    </location>
</feature>
<feature type="DNA-binding region" description="Zn(2)-C6 fungal-type" evidence="1">
    <location>
        <begin position="23"/>
        <end position="51"/>
    </location>
</feature>
<feature type="region of interest" description="Disordered" evidence="2">
    <location>
        <begin position="1"/>
        <end position="20"/>
    </location>
</feature>
<name>LEPE_ASPFN</name>
<reference key="1">
    <citation type="journal article" date="2015" name="Genome Announc.">
        <title>Genome sequence of Aspergillus flavus NRRL 3357, a strain that causes aflatoxin contamination of food and feed.</title>
        <authorList>
            <person name="Nierman W.C."/>
            <person name="Yu J."/>
            <person name="Fedorova-Abrams N.D."/>
            <person name="Losada L."/>
            <person name="Cleveland T.E."/>
            <person name="Bhatnagar D."/>
            <person name="Bennett J.W."/>
            <person name="Dean R."/>
            <person name="Payne G.A."/>
        </authorList>
    </citation>
    <scope>NUCLEOTIDE SEQUENCE [LARGE SCALE GENOMIC DNA]</scope>
    <source>
        <strain>ATCC 200026 / FGSC A1120 / IAM 13836 / NRRL 3357 / JCM 12722 / SRRC 167</strain>
    </source>
</reference>
<reference key="2">
    <citation type="journal article" date="2010" name="Mol. Plant Pathol.">
        <title>Beyond aflatoxin: four distinct expression patterns and functional roles associated with Aspergillus flavus secondary metabolism gene clusters.</title>
        <authorList>
            <person name="Georgianna D.R."/>
            <person name="Fedorova N.D."/>
            <person name="Burroughs J.L."/>
            <person name="Dolezal A.L."/>
            <person name="Bok J.W."/>
            <person name="Horowitz-Brown S."/>
            <person name="Woloshuk C.P."/>
            <person name="Yu J."/>
            <person name="Keller N.P."/>
            <person name="Payne G.A."/>
        </authorList>
    </citation>
    <scope>IDENTIFICATION OF THE GENE CLUSTER 23</scope>
    <scope>FUNCTION</scope>
</reference>
<reference key="3">
    <citation type="journal article" date="2015" name="Fungal Genet. Biol.">
        <title>An Aspergillus flavus secondary metabolic gene cluster containing a hybrid PKS-NRPS is necessary for synthesis of the 2-pyridones, leporins.</title>
        <authorList>
            <person name="Cary J.W."/>
            <person name="Uka V."/>
            <person name="Han Z."/>
            <person name="Buyst D."/>
            <person name="Harris-Coward P.Y."/>
            <person name="Ehrlich K.C."/>
            <person name="Wei Q."/>
            <person name="Bhatnagar D."/>
            <person name="Dowd P.F."/>
            <person name="Martens S.L."/>
            <person name="Calvo A.M."/>
            <person name="Martins J.C."/>
            <person name="Vanhaecke L."/>
            <person name="Coenye T."/>
            <person name="De Saeger S."/>
            <person name="Di Mavungu J.D."/>
        </authorList>
    </citation>
    <scope>FUNCTION</scope>
    <scope>DISRUPTION PHENOTYPE</scope>
</reference>
<keyword id="KW-0238">DNA-binding</keyword>
<keyword id="KW-0479">Metal-binding</keyword>
<keyword id="KW-0539">Nucleus</keyword>
<keyword id="KW-0804">Transcription</keyword>
<keyword id="KW-0805">Transcription regulation</keyword>
<keyword id="KW-0862">Zinc</keyword>
<dbReference type="EMBL" id="EQ963479">
    <property type="protein sequence ID" value="EED49868.1"/>
    <property type="molecule type" value="Genomic_DNA"/>
</dbReference>
<dbReference type="RefSeq" id="XP_002380249.1">
    <property type="nucleotide sequence ID" value="XM_002380208.1"/>
</dbReference>
<dbReference type="SMR" id="B8NJG9"/>
<dbReference type="STRING" id="332952.B8NJG9"/>
<dbReference type="EnsemblFungi" id="EED49868">
    <property type="protein sequence ID" value="EED49868"/>
    <property type="gene ID" value="AFLA_066900"/>
</dbReference>
<dbReference type="VEuPathDB" id="FungiDB:AFLA_008627"/>
<dbReference type="eggNOG" id="ENOG502SMMJ">
    <property type="taxonomic scope" value="Eukaryota"/>
</dbReference>
<dbReference type="HOGENOM" id="CLU_007091_2_0_1"/>
<dbReference type="OMA" id="VGHEILC"/>
<dbReference type="GO" id="GO:0005634">
    <property type="term" value="C:nucleus"/>
    <property type="evidence" value="ECO:0007669"/>
    <property type="project" value="UniProtKB-SubCell"/>
</dbReference>
<dbReference type="GO" id="GO:0001228">
    <property type="term" value="F:DNA-binding transcription activator activity, RNA polymerase II-specific"/>
    <property type="evidence" value="ECO:0007669"/>
    <property type="project" value="TreeGrafter"/>
</dbReference>
<dbReference type="GO" id="GO:0000978">
    <property type="term" value="F:RNA polymerase II cis-regulatory region sequence-specific DNA binding"/>
    <property type="evidence" value="ECO:0007669"/>
    <property type="project" value="TreeGrafter"/>
</dbReference>
<dbReference type="GO" id="GO:0008270">
    <property type="term" value="F:zinc ion binding"/>
    <property type="evidence" value="ECO:0007669"/>
    <property type="project" value="InterPro"/>
</dbReference>
<dbReference type="GO" id="GO:0006351">
    <property type="term" value="P:DNA-templated transcription"/>
    <property type="evidence" value="ECO:0007669"/>
    <property type="project" value="InterPro"/>
</dbReference>
<dbReference type="CDD" id="cd12148">
    <property type="entry name" value="fungal_TF_MHR"/>
    <property type="match status" value="1"/>
</dbReference>
<dbReference type="CDD" id="cd00067">
    <property type="entry name" value="GAL4"/>
    <property type="match status" value="1"/>
</dbReference>
<dbReference type="Gene3D" id="4.10.240.10">
    <property type="entry name" value="Zn(2)-C6 fungal-type DNA-binding domain"/>
    <property type="match status" value="1"/>
</dbReference>
<dbReference type="InterPro" id="IPR051430">
    <property type="entry name" value="Fungal_TF_Env_Response"/>
</dbReference>
<dbReference type="InterPro" id="IPR007219">
    <property type="entry name" value="Transcription_factor_dom_fun"/>
</dbReference>
<dbReference type="InterPro" id="IPR036864">
    <property type="entry name" value="Zn2-C6_fun-type_DNA-bd_sf"/>
</dbReference>
<dbReference type="InterPro" id="IPR001138">
    <property type="entry name" value="Zn2Cys6_DnaBD"/>
</dbReference>
<dbReference type="PANTHER" id="PTHR31944:SF129">
    <property type="entry name" value="ASPYRIDONES CLUSTER REGULATOR APDR-RELATED"/>
    <property type="match status" value="1"/>
</dbReference>
<dbReference type="PANTHER" id="PTHR31944">
    <property type="entry name" value="HEME-RESPONSIVE ZINC FINGER TRANSCRIPTION FACTOR HAP1"/>
    <property type="match status" value="1"/>
</dbReference>
<dbReference type="Pfam" id="PF04082">
    <property type="entry name" value="Fungal_trans"/>
    <property type="match status" value="1"/>
</dbReference>
<dbReference type="Pfam" id="PF00172">
    <property type="entry name" value="Zn_clus"/>
    <property type="match status" value="1"/>
</dbReference>
<dbReference type="SMART" id="SM00906">
    <property type="entry name" value="Fungal_trans"/>
    <property type="match status" value="1"/>
</dbReference>
<dbReference type="SMART" id="SM00066">
    <property type="entry name" value="GAL4"/>
    <property type="match status" value="1"/>
</dbReference>
<dbReference type="SUPFAM" id="SSF57701">
    <property type="entry name" value="Zn2/Cys6 DNA-binding domain"/>
    <property type="match status" value="1"/>
</dbReference>
<dbReference type="PROSITE" id="PS00463">
    <property type="entry name" value="ZN2_CY6_FUNGAL_1"/>
    <property type="match status" value="1"/>
</dbReference>
<dbReference type="PROSITE" id="PS50048">
    <property type="entry name" value="ZN2_CY6_FUNGAL_2"/>
    <property type="match status" value="1"/>
</dbReference>
<protein>
    <recommendedName>
        <fullName evidence="4">Transcription factor lepE</fullName>
    </recommendedName>
    <alternativeName>
        <fullName evidence="4">Leporins biosynthesis protein E</fullName>
    </alternativeName>
</protein>
<accession>B8NJG9</accession>